<proteinExistence type="inferred from homology"/>
<evidence type="ECO:0000250" key="1">
    <source>
        <dbReference type="UniProtKB" id="Q8R2Z5"/>
    </source>
</evidence>
<evidence type="ECO:0000255" key="2"/>
<evidence type="ECO:0000255" key="3">
    <source>
        <dbReference type="PROSITE-ProRule" id="PRU00219"/>
    </source>
</evidence>
<evidence type="ECO:0000255" key="4">
    <source>
        <dbReference type="PROSITE-ProRule" id="PRU00316"/>
    </source>
</evidence>
<evidence type="ECO:0000269" key="5">
    <source>
    </source>
</evidence>
<evidence type="ECO:0000312" key="6">
    <source>
        <dbReference type="ZFIN" id="ZDB-GENE-030131-5921"/>
    </source>
</evidence>
<organism>
    <name type="scientific">Danio rerio</name>
    <name type="common">Zebrafish</name>
    <name type="synonym">Brachydanio rerio</name>
    <dbReference type="NCBI Taxonomy" id="7955"/>
    <lineage>
        <taxon>Eukaryota</taxon>
        <taxon>Metazoa</taxon>
        <taxon>Chordata</taxon>
        <taxon>Craniata</taxon>
        <taxon>Vertebrata</taxon>
        <taxon>Euteleostomi</taxon>
        <taxon>Actinopterygii</taxon>
        <taxon>Neopterygii</taxon>
        <taxon>Teleostei</taxon>
        <taxon>Ostariophysi</taxon>
        <taxon>Cypriniformes</taxon>
        <taxon>Danionidae</taxon>
        <taxon>Danioninae</taxon>
        <taxon>Danio</taxon>
    </lineage>
</organism>
<comment type="function">
    <text evidence="1 5">Promotes matrix assembly (By similarity). Involved in the organization of skeletal muscles and in the formation of neuromuscular junctions (PubMed:33559681).</text>
</comment>
<comment type="subunit">
    <text evidence="1">Homodimer or homomultimer; disulfide-linked.</text>
</comment>
<comment type="subcellular location">
    <subcellularLocation>
        <location evidence="1">Secreted</location>
        <location evidence="1">Extracellular space</location>
        <location evidence="1">Extracellular matrix</location>
        <location evidence="1">Basement membrane</location>
    </subcellularLocation>
</comment>
<comment type="disruption phenotype">
    <text evidence="5">Mutants primary motor neurons have reduced axonal branching innervating the muscle fibers and secondary motor neurons have aberrant axonal structure. Mutants skeletal muscle show also an abnormal structure with disorganized myofibers and reduced synaptic formation at the neuromuscular junction. They show a progressive impairment of locomotor behavior and have smaller jaws and abnormal cartilage patterning compared to controls.</text>
</comment>
<feature type="signal peptide" evidence="2">
    <location>
        <begin position="1"/>
        <end position="21"/>
    </location>
</feature>
<feature type="chain" id="PRO_5003217993" description="von Willebrand factor A domain-containing protein 1" evidence="2">
    <location>
        <begin position="22"/>
        <end position="503"/>
    </location>
</feature>
<feature type="domain" description="VWFA" evidence="3">
    <location>
        <begin position="36"/>
        <end position="213"/>
    </location>
</feature>
<feature type="domain" description="Fibronectin type-III 1" evidence="4">
    <location>
        <begin position="218"/>
        <end position="324"/>
    </location>
</feature>
<feature type="domain" description="Fibronectin type-III 2" evidence="4">
    <location>
        <begin position="331"/>
        <end position="423"/>
    </location>
</feature>
<reference key="1">
    <citation type="journal article" date="2013" name="Nature">
        <title>The zebrafish reference genome sequence and its relationship to the human genome.</title>
        <authorList>
            <person name="Howe K."/>
            <person name="Clark M.D."/>
            <person name="Torroja C.F."/>
            <person name="Torrance J."/>
            <person name="Berthelot C."/>
            <person name="Muffato M."/>
            <person name="Collins J.E."/>
            <person name="Humphray S."/>
            <person name="McLaren K."/>
            <person name="Matthews L."/>
            <person name="McLaren S."/>
            <person name="Sealy I."/>
            <person name="Caccamo M."/>
            <person name="Churcher C."/>
            <person name="Scott C."/>
            <person name="Barrett J.C."/>
            <person name="Koch R."/>
            <person name="Rauch G.J."/>
            <person name="White S."/>
            <person name="Chow W."/>
            <person name="Kilian B."/>
            <person name="Quintais L.T."/>
            <person name="Guerra-Assuncao J.A."/>
            <person name="Zhou Y."/>
            <person name="Gu Y."/>
            <person name="Yen J."/>
            <person name="Vogel J.H."/>
            <person name="Eyre T."/>
            <person name="Redmond S."/>
            <person name="Banerjee R."/>
            <person name="Chi J."/>
            <person name="Fu B."/>
            <person name="Langley E."/>
            <person name="Maguire S.F."/>
            <person name="Laird G.K."/>
            <person name="Lloyd D."/>
            <person name="Kenyon E."/>
            <person name="Donaldson S."/>
            <person name="Sehra H."/>
            <person name="Almeida-King J."/>
            <person name="Loveland J."/>
            <person name="Trevanion S."/>
            <person name="Jones M."/>
            <person name="Quail M."/>
            <person name="Willey D."/>
            <person name="Hunt A."/>
            <person name="Burton J."/>
            <person name="Sims S."/>
            <person name="McLay K."/>
            <person name="Plumb B."/>
            <person name="Davis J."/>
            <person name="Clee C."/>
            <person name="Oliver K."/>
            <person name="Clark R."/>
            <person name="Riddle C."/>
            <person name="Elliot D."/>
            <person name="Threadgold G."/>
            <person name="Harden G."/>
            <person name="Ware D."/>
            <person name="Begum S."/>
            <person name="Mortimore B."/>
            <person name="Kerry G."/>
            <person name="Heath P."/>
            <person name="Phillimore B."/>
            <person name="Tracey A."/>
            <person name="Corby N."/>
            <person name="Dunn M."/>
            <person name="Johnson C."/>
            <person name="Wood J."/>
            <person name="Clark S."/>
            <person name="Pelan S."/>
            <person name="Griffiths G."/>
            <person name="Smith M."/>
            <person name="Glithero R."/>
            <person name="Howden P."/>
            <person name="Barker N."/>
            <person name="Lloyd C."/>
            <person name="Stevens C."/>
            <person name="Harley J."/>
            <person name="Holt K."/>
            <person name="Panagiotidis G."/>
            <person name="Lovell J."/>
            <person name="Beasley H."/>
            <person name="Henderson C."/>
            <person name="Gordon D."/>
            <person name="Auger K."/>
            <person name="Wright D."/>
            <person name="Collins J."/>
            <person name="Raisen C."/>
            <person name="Dyer L."/>
            <person name="Leung K."/>
            <person name="Robertson L."/>
            <person name="Ambridge K."/>
            <person name="Leongamornlert D."/>
            <person name="McGuire S."/>
            <person name="Gilderthorp R."/>
            <person name="Griffiths C."/>
            <person name="Manthravadi D."/>
            <person name="Nichol S."/>
            <person name="Barker G."/>
            <person name="Whitehead S."/>
            <person name="Kay M."/>
            <person name="Brown J."/>
            <person name="Murnane C."/>
            <person name="Gray E."/>
            <person name="Humphries M."/>
            <person name="Sycamore N."/>
            <person name="Barker D."/>
            <person name="Saunders D."/>
            <person name="Wallis J."/>
            <person name="Babbage A."/>
            <person name="Hammond S."/>
            <person name="Mashreghi-Mohammadi M."/>
            <person name="Barr L."/>
            <person name="Martin S."/>
            <person name="Wray P."/>
            <person name="Ellington A."/>
            <person name="Matthews N."/>
            <person name="Ellwood M."/>
            <person name="Woodmansey R."/>
            <person name="Clark G."/>
            <person name="Cooper J."/>
            <person name="Tromans A."/>
            <person name="Grafham D."/>
            <person name="Skuce C."/>
            <person name="Pandian R."/>
            <person name="Andrews R."/>
            <person name="Harrison E."/>
            <person name="Kimberley A."/>
            <person name="Garnett J."/>
            <person name="Fosker N."/>
            <person name="Hall R."/>
            <person name="Garner P."/>
            <person name="Kelly D."/>
            <person name="Bird C."/>
            <person name="Palmer S."/>
            <person name="Gehring I."/>
            <person name="Berger A."/>
            <person name="Dooley C.M."/>
            <person name="Ersan-Urun Z."/>
            <person name="Eser C."/>
            <person name="Geiger H."/>
            <person name="Geisler M."/>
            <person name="Karotki L."/>
            <person name="Kirn A."/>
            <person name="Konantz J."/>
            <person name="Konantz M."/>
            <person name="Oberlander M."/>
            <person name="Rudolph-Geiger S."/>
            <person name="Teucke M."/>
            <person name="Lanz C."/>
            <person name="Raddatz G."/>
            <person name="Osoegawa K."/>
            <person name="Zhu B."/>
            <person name="Rapp A."/>
            <person name="Widaa S."/>
            <person name="Langford C."/>
            <person name="Yang F."/>
            <person name="Schuster S.C."/>
            <person name="Carter N.P."/>
            <person name="Harrow J."/>
            <person name="Ning Z."/>
            <person name="Herrero J."/>
            <person name="Searle S.M."/>
            <person name="Enright A."/>
            <person name="Geisler R."/>
            <person name="Plasterk R.H."/>
            <person name="Lee C."/>
            <person name="Westerfield M."/>
            <person name="de Jong P.J."/>
            <person name="Zon L.I."/>
            <person name="Postlethwait J.H."/>
            <person name="Nusslein-Volhard C."/>
            <person name="Hubbard T.J."/>
            <person name="Roest Crollius H."/>
            <person name="Rogers J."/>
            <person name="Stemple D.L."/>
        </authorList>
    </citation>
    <scope>NUCLEOTIDE SEQUENCE [LARGE SCALE GENOMIC DNA]</scope>
    <source>
        <strain>Tuebingen</strain>
    </source>
</reference>
<reference key="2">
    <citation type="journal article" date="2021" name="Brain">
        <title>An ancestral 10-bp repeat expansion in VWA1 causes recessive hereditary motor neuropathy.</title>
        <authorList>
            <consortium name="Genomics England Research Consortium"/>
            <person name="Pagnamenta A.T."/>
            <person name="Kaiyrzhanov R."/>
            <person name="Zou Y."/>
            <person name="Da'as S.I."/>
            <person name="Maroofian R."/>
            <person name="Donkervoort S."/>
            <person name="Dominik N."/>
            <person name="Lauffer M."/>
            <person name="Ferla M.P."/>
            <person name="Orioli A."/>
            <person name="Giess A."/>
            <person name="Tucci A."/>
            <person name="Beetz C."/>
            <person name="Sedghi M."/>
            <person name="Ansari B."/>
            <person name="Barresi R."/>
            <person name="Basiri K."/>
            <person name="Cortese A."/>
            <person name="Elgar G."/>
            <person name="Fernandez-Garcia M.A."/>
            <person name="Yip J."/>
            <person name="Foley A.R."/>
            <person name="Gutowski N."/>
            <person name="Jungbluth H."/>
            <person name="Lassche S."/>
            <person name="Lavin T."/>
            <person name="Marcelis C."/>
            <person name="Marks P."/>
            <person name="Marini-Bettolo C."/>
            <person name="Medne L."/>
            <person name="Moslemi A.R."/>
            <person name="Sarkozy A."/>
            <person name="Reilly M.M."/>
            <person name="Muntoni F."/>
            <person name="Millan F."/>
            <person name="Muraresku C.C."/>
            <person name="Need A.C."/>
            <person name="Nemeth A.H."/>
            <person name="Neuhaus S.B."/>
            <person name="Norwood F."/>
            <person name="O'Donnell M."/>
            <person name="O'Driscoll M."/>
            <person name="Rankin J."/>
            <person name="Yum S.W."/>
            <person name="Zolkipli-Cunningham Z."/>
            <person name="Brusius I."/>
            <person name="Wunderlich G."/>
            <person name="Karakaya M."/>
            <person name="Wirth B."/>
            <person name="Fakhro K.A."/>
            <person name="Tajsharghi H."/>
            <person name="Boennemann C.G."/>
            <person name="Taylor J.C."/>
            <person name="Houlden H."/>
        </authorList>
    </citation>
    <scope>DISRUPTION PHENOTYPE</scope>
    <scope>FUNCTION</scope>
</reference>
<gene>
    <name evidence="6" type="primary">vwa1</name>
</gene>
<keyword id="KW-0084">Basement membrane</keyword>
<keyword id="KW-1015">Disulfide bond</keyword>
<keyword id="KW-0272">Extracellular matrix</keyword>
<keyword id="KW-0597">Phosphoprotein</keyword>
<keyword id="KW-1185">Reference proteome</keyword>
<keyword id="KW-0677">Repeat</keyword>
<keyword id="KW-0964">Secreted</keyword>
<keyword id="KW-0732">Signal</keyword>
<dbReference type="EMBL" id="BX255940">
    <property type="status" value="NOT_ANNOTATED_CDS"/>
    <property type="molecule type" value="Genomic_DNA"/>
</dbReference>
<dbReference type="EMBL" id="BX649542">
    <property type="status" value="NOT_ANNOTATED_CDS"/>
    <property type="molecule type" value="Genomic_DNA"/>
</dbReference>
<dbReference type="RefSeq" id="NP_001410723.1">
    <property type="nucleotide sequence ID" value="NM_001423794.1"/>
</dbReference>
<dbReference type="RefSeq" id="XP_005174191.1">
    <property type="nucleotide sequence ID" value="XM_005174134.5"/>
</dbReference>
<dbReference type="RefSeq" id="XP_696796.2">
    <property type="nucleotide sequence ID" value="XM_691704.5"/>
</dbReference>
<dbReference type="SMR" id="E7FF10"/>
<dbReference type="FunCoup" id="E7FF10">
    <property type="interactions" value="1436"/>
</dbReference>
<dbReference type="STRING" id="7955.ENSDARP00000099327"/>
<dbReference type="PaxDb" id="7955-ENSDARP00000099327"/>
<dbReference type="PeptideAtlas" id="E7FF10"/>
<dbReference type="Ensembl" id="ENSDART00000110868">
    <property type="protein sequence ID" value="ENSDARP00000099327"/>
    <property type="gene ID" value="ENSDARG00000075468"/>
</dbReference>
<dbReference type="Ensembl" id="ENSDART00000190961">
    <property type="protein sequence ID" value="ENSDARP00000157119"/>
    <property type="gene ID" value="ENSDARG00000075468"/>
</dbReference>
<dbReference type="GeneID" id="568379"/>
<dbReference type="AGR" id="ZFIN:ZDB-GENE-030131-5921"/>
<dbReference type="CTD" id="64856"/>
<dbReference type="ZFIN" id="ZDB-GENE-030131-5921">
    <property type="gene designation" value="vwa1"/>
</dbReference>
<dbReference type="eggNOG" id="KOG3544">
    <property type="taxonomic scope" value="Eukaryota"/>
</dbReference>
<dbReference type="HOGENOM" id="CLU_042926_0_0_1"/>
<dbReference type="InParanoid" id="E7FF10"/>
<dbReference type="OMA" id="WMLMCLL"/>
<dbReference type="OrthoDB" id="9949424at2759"/>
<dbReference type="PhylomeDB" id="E7FF10"/>
<dbReference type="TreeFam" id="TF316402"/>
<dbReference type="PRO" id="PR:E7FF10"/>
<dbReference type="Proteomes" id="UP000000437">
    <property type="component" value="Chromosome 23"/>
</dbReference>
<dbReference type="Bgee" id="ENSDARG00000075468">
    <property type="expression patterns" value="Expressed in pharyngeal gill and 20 other cell types or tissues"/>
</dbReference>
<dbReference type="ExpressionAtlas" id="E7FF10">
    <property type="expression patterns" value="baseline and differential"/>
</dbReference>
<dbReference type="GO" id="GO:0005604">
    <property type="term" value="C:basement membrane"/>
    <property type="evidence" value="ECO:0007669"/>
    <property type="project" value="UniProtKB-SubCell"/>
</dbReference>
<dbReference type="GO" id="GO:0062023">
    <property type="term" value="C:collagen-containing extracellular matrix"/>
    <property type="evidence" value="ECO:0000318"/>
    <property type="project" value="GO_Central"/>
</dbReference>
<dbReference type="GO" id="GO:0005576">
    <property type="term" value="C:extracellular region"/>
    <property type="evidence" value="ECO:0007669"/>
    <property type="project" value="UniProtKB-KW"/>
</dbReference>
<dbReference type="GO" id="GO:0007409">
    <property type="term" value="P:axonogenesis"/>
    <property type="evidence" value="ECO:0000315"/>
    <property type="project" value="ZFIN"/>
</dbReference>
<dbReference type="GO" id="GO:0014032">
    <property type="term" value="P:neural crest cell development"/>
    <property type="evidence" value="ECO:0000315"/>
    <property type="project" value="ZFIN"/>
</dbReference>
<dbReference type="GO" id="GO:1902026">
    <property type="term" value="P:regulation of cartilage condensation"/>
    <property type="evidence" value="ECO:0000315"/>
    <property type="project" value="ZFIN"/>
</dbReference>
<dbReference type="GO" id="GO:0061035">
    <property type="term" value="P:regulation of cartilage development"/>
    <property type="evidence" value="ECO:0000315"/>
    <property type="project" value="ZFIN"/>
</dbReference>
<dbReference type="GO" id="GO:0051124">
    <property type="term" value="P:synaptic assembly at neuromuscular junction"/>
    <property type="evidence" value="ECO:0000315"/>
    <property type="project" value="ZFIN"/>
</dbReference>
<dbReference type="CDD" id="cd00063">
    <property type="entry name" value="FN3"/>
    <property type="match status" value="2"/>
</dbReference>
<dbReference type="CDD" id="cd01450">
    <property type="entry name" value="vWFA_subfamily_ECM"/>
    <property type="match status" value="1"/>
</dbReference>
<dbReference type="Gene3D" id="2.60.40.10">
    <property type="entry name" value="Immunoglobulins"/>
    <property type="match status" value="2"/>
</dbReference>
<dbReference type="Gene3D" id="3.40.50.410">
    <property type="entry name" value="von Willebrand factor, type A domain"/>
    <property type="match status" value="1"/>
</dbReference>
<dbReference type="InterPro" id="IPR050525">
    <property type="entry name" value="ECM_Assembly_Org"/>
</dbReference>
<dbReference type="InterPro" id="IPR003961">
    <property type="entry name" value="FN3_dom"/>
</dbReference>
<dbReference type="InterPro" id="IPR036116">
    <property type="entry name" value="FN3_sf"/>
</dbReference>
<dbReference type="InterPro" id="IPR013783">
    <property type="entry name" value="Ig-like_fold"/>
</dbReference>
<dbReference type="InterPro" id="IPR002035">
    <property type="entry name" value="VWF_A"/>
</dbReference>
<dbReference type="InterPro" id="IPR036465">
    <property type="entry name" value="vWFA_dom_sf"/>
</dbReference>
<dbReference type="PANTHER" id="PTHR24020">
    <property type="entry name" value="COLLAGEN ALPHA"/>
    <property type="match status" value="1"/>
</dbReference>
<dbReference type="PANTHER" id="PTHR24020:SF77">
    <property type="entry name" value="VON WILLEBRAND FACTOR A DOMAIN-CONTAINING PROTEIN 1"/>
    <property type="match status" value="1"/>
</dbReference>
<dbReference type="Pfam" id="PF00041">
    <property type="entry name" value="fn3"/>
    <property type="match status" value="2"/>
</dbReference>
<dbReference type="Pfam" id="PF00092">
    <property type="entry name" value="VWA"/>
    <property type="match status" value="1"/>
</dbReference>
<dbReference type="PRINTS" id="PR00453">
    <property type="entry name" value="VWFADOMAIN"/>
</dbReference>
<dbReference type="SMART" id="SM00060">
    <property type="entry name" value="FN3"/>
    <property type="match status" value="3"/>
</dbReference>
<dbReference type="SMART" id="SM00327">
    <property type="entry name" value="VWA"/>
    <property type="match status" value="1"/>
</dbReference>
<dbReference type="SUPFAM" id="SSF49265">
    <property type="entry name" value="Fibronectin type III"/>
    <property type="match status" value="2"/>
</dbReference>
<dbReference type="SUPFAM" id="SSF53300">
    <property type="entry name" value="vWA-like"/>
    <property type="match status" value="1"/>
</dbReference>
<dbReference type="PROSITE" id="PS50853">
    <property type="entry name" value="FN3"/>
    <property type="match status" value="2"/>
</dbReference>
<dbReference type="PROSITE" id="PS50234">
    <property type="entry name" value="VWFA"/>
    <property type="match status" value="1"/>
</dbReference>
<name>VWA1_DANRE</name>
<accession>E7FF10</accession>
<protein>
    <recommendedName>
        <fullName>von Willebrand factor A domain-containing protein 1</fullName>
    </recommendedName>
</protein>
<sequence>MEVRKALTCVFLTVFLCSGDAQDSVTDSVLNCCEGDVLFLLDSSGSVASYEFSRMVDFLSELLLPFSLGPDHVRVGLLQVGTEPHLEFGFDAYSSQQGLQAALERTKQLKGDTNTVEALLMARAQVLRVGVPGGARPDLPRVLVWLTDGVDPGNVQEPMARLRDEGVAVLVVSTGHGNYQVLREVVSPPTEEHLFFVDIDDISIIGEDLRNSIIEIIRAERLQVKSVSSTSAQLEWRPVLSGSGSGYYDIKFGPMRTGQIPGVPGGASTDPGSFQRITRPADSSSAQLTGLRPDTTYTVTLTPKNNQQVLNTLQTSFTTQTVNPPEPQIQLLSSLSVSESSSNSVRVSWAPLLPRLIQEYQLEYSALPSGPLRVLRVSNTHNSTVITDLQPDTQYLLTVSAKQTSGKERAMTVKVCTQEVLPALSDLQLSSVGDETVQLRWKGSFDGLRGYWVTWERGHSQRSTLYLPPNRLSTTLNHVPSRARVCVSPVYRTARGEGLCCTA</sequence>